<name>RAS4B_HUMAN</name>
<accession>C9J798</accession>
<dbReference type="EMBL" id="AC093668">
    <property type="status" value="NOT_ANNOTATED_CDS"/>
    <property type="molecule type" value="Genomic_DNA"/>
</dbReference>
<dbReference type="CCDS" id="CCDS94160.1"/>
<dbReference type="RefSeq" id="NP_001354696.1">
    <property type="nucleotide sequence ID" value="NM_001367767.2"/>
</dbReference>
<dbReference type="RefSeq" id="XP_005250141.1">
    <property type="nucleotide sequence ID" value="XM_005250084.2"/>
</dbReference>
<dbReference type="SMR" id="C9J798"/>
<dbReference type="BioGRID" id="938526">
    <property type="interactions" value="4"/>
</dbReference>
<dbReference type="FunCoup" id="C9J798">
    <property type="interactions" value="234"/>
</dbReference>
<dbReference type="IntAct" id="C9J798">
    <property type="interactions" value="1"/>
</dbReference>
<dbReference type="GlyGen" id="C9J798">
    <property type="glycosylation" value="2 sites, 1 N-linked glycan (2 sites)"/>
</dbReference>
<dbReference type="iPTMnet" id="C9J798"/>
<dbReference type="PhosphoSitePlus" id="C9J798"/>
<dbReference type="BioMuta" id="RASA4B"/>
<dbReference type="jPOST" id="C9J798"/>
<dbReference type="MassIVE" id="C9J798"/>
<dbReference type="PeptideAtlas" id="C9J798"/>
<dbReference type="ProteomicsDB" id="8876"/>
<dbReference type="Pumba" id="C9J798"/>
<dbReference type="Ensembl" id="ENST00000465829.6">
    <property type="protein sequence ID" value="ENSP00000417895.1"/>
    <property type="gene ID" value="ENSG00000170667.16"/>
</dbReference>
<dbReference type="GeneID" id="100271927"/>
<dbReference type="MANE-Select" id="ENST00000465829.6">
    <property type="protein sequence ID" value="ENSP00000417895.1"/>
    <property type="RefSeq nucleotide sequence ID" value="NM_001367767.2"/>
    <property type="RefSeq protein sequence ID" value="NP_001354696.1"/>
</dbReference>
<dbReference type="UCSC" id="uc003uzt.3">
    <property type="organism name" value="human"/>
</dbReference>
<dbReference type="AGR" id="HGNC:35202"/>
<dbReference type="GeneCards" id="RASA4B"/>
<dbReference type="HGNC" id="HGNC:35202">
    <property type="gene designation" value="RASA4B"/>
</dbReference>
<dbReference type="HPA" id="ENSG00000170667">
    <property type="expression patterns" value="Tissue enriched (skeletal)"/>
</dbReference>
<dbReference type="neXtProt" id="NX_C9J798"/>
<dbReference type="VEuPathDB" id="HostDB:ENSG00000170667"/>
<dbReference type="GeneTree" id="ENSGT00940000160149"/>
<dbReference type="InParanoid" id="C9J798"/>
<dbReference type="OMA" id="MTHERVI"/>
<dbReference type="OrthoDB" id="1562946at2759"/>
<dbReference type="PAN-GO" id="C9J798">
    <property type="GO annotations" value="0 GO annotations based on evolutionary models"/>
</dbReference>
<dbReference type="PhylomeDB" id="C9J798"/>
<dbReference type="TreeFam" id="TF105302"/>
<dbReference type="PathwayCommons" id="C9J798"/>
<dbReference type="SignaLink" id="C9J798"/>
<dbReference type="BioGRID-ORCS" id="100271927">
    <property type="hits" value="39 hits in 1039 CRISPR screens"/>
</dbReference>
<dbReference type="ChiTaRS" id="RASA4B">
    <property type="organism name" value="human"/>
</dbReference>
<dbReference type="GenomeRNAi" id="100271927"/>
<dbReference type="Pharos" id="C9J798">
    <property type="development level" value="Tdark"/>
</dbReference>
<dbReference type="PRO" id="PR:C9J798"/>
<dbReference type="Proteomes" id="UP000005640">
    <property type="component" value="Chromosome 7"/>
</dbReference>
<dbReference type="RNAct" id="C9J798">
    <property type="molecule type" value="protein"/>
</dbReference>
<dbReference type="Bgee" id="ENSG00000170667">
    <property type="expression patterns" value="Expressed in hindlimb stylopod muscle and 94 other cell types or tissues"/>
</dbReference>
<dbReference type="ExpressionAtlas" id="C9J798">
    <property type="expression patterns" value="baseline and differential"/>
</dbReference>
<dbReference type="GO" id="GO:0005829">
    <property type="term" value="C:cytosol"/>
    <property type="evidence" value="ECO:0007669"/>
    <property type="project" value="UniProtKB-SubCell"/>
</dbReference>
<dbReference type="GO" id="GO:0005886">
    <property type="term" value="C:plasma membrane"/>
    <property type="evidence" value="ECO:0007669"/>
    <property type="project" value="UniProtKB-SubCell"/>
</dbReference>
<dbReference type="GO" id="GO:0005096">
    <property type="term" value="F:GTPase activator activity"/>
    <property type="evidence" value="ECO:0007669"/>
    <property type="project" value="UniProtKB-KW"/>
</dbReference>
<dbReference type="GO" id="GO:0005543">
    <property type="term" value="F:phospholipid binding"/>
    <property type="evidence" value="ECO:0007669"/>
    <property type="project" value="InterPro"/>
</dbReference>
<dbReference type="GO" id="GO:0008270">
    <property type="term" value="F:zinc ion binding"/>
    <property type="evidence" value="ECO:0007669"/>
    <property type="project" value="UniProtKB-KW"/>
</dbReference>
<dbReference type="GO" id="GO:0071277">
    <property type="term" value="P:cellular response to calcium ion"/>
    <property type="evidence" value="ECO:0007669"/>
    <property type="project" value="InterPro"/>
</dbReference>
<dbReference type="GO" id="GO:0035556">
    <property type="term" value="P:intracellular signal transduction"/>
    <property type="evidence" value="ECO:0007669"/>
    <property type="project" value="InterPro"/>
</dbReference>
<dbReference type="GO" id="GO:0046580">
    <property type="term" value="P:negative regulation of Ras protein signal transduction"/>
    <property type="evidence" value="ECO:0007669"/>
    <property type="project" value="InterPro"/>
</dbReference>
<dbReference type="CDD" id="cd04054">
    <property type="entry name" value="C2A_Rasal1_RasA4"/>
    <property type="match status" value="1"/>
</dbReference>
<dbReference type="CDD" id="cd04025">
    <property type="entry name" value="C2B_RasA1_RasA4"/>
    <property type="match status" value="1"/>
</dbReference>
<dbReference type="CDD" id="cd13372">
    <property type="entry name" value="PH_CAPRI"/>
    <property type="match status" value="1"/>
</dbReference>
<dbReference type="CDD" id="cd05395">
    <property type="entry name" value="RasGAP_RASA4"/>
    <property type="match status" value="1"/>
</dbReference>
<dbReference type="FunFam" id="1.10.506.10:FF:000020">
    <property type="entry name" value="Ras GTPase-activating protein 4 isoform 1"/>
    <property type="match status" value="1"/>
</dbReference>
<dbReference type="FunFam" id="2.30.29.30:FF:000283">
    <property type="entry name" value="Ras GTPase-activating protein 4 isoform 1"/>
    <property type="match status" value="1"/>
</dbReference>
<dbReference type="FunFam" id="2.60.40.150:FF:000069">
    <property type="entry name" value="Ras GTPase-activating protein 4 isoform 1"/>
    <property type="match status" value="1"/>
</dbReference>
<dbReference type="FunFam" id="2.60.40.150:FF:000150">
    <property type="entry name" value="RAS protein activator like 1"/>
    <property type="match status" value="1"/>
</dbReference>
<dbReference type="Gene3D" id="2.60.40.150">
    <property type="entry name" value="C2 domain"/>
    <property type="match status" value="2"/>
</dbReference>
<dbReference type="Gene3D" id="1.10.506.10">
    <property type="entry name" value="GTPase Activation - p120gap, domain 1"/>
    <property type="match status" value="1"/>
</dbReference>
<dbReference type="Gene3D" id="2.30.29.30">
    <property type="entry name" value="Pleckstrin-homology domain (PH domain)/Phosphotyrosine-binding domain (PTB)"/>
    <property type="match status" value="1"/>
</dbReference>
<dbReference type="InterPro" id="IPR000008">
    <property type="entry name" value="C2_dom"/>
</dbReference>
<dbReference type="InterPro" id="IPR035892">
    <property type="entry name" value="C2_domain_sf"/>
</dbReference>
<dbReference type="InterPro" id="IPR011993">
    <property type="entry name" value="PH-like_dom_sf"/>
</dbReference>
<dbReference type="InterPro" id="IPR001849">
    <property type="entry name" value="PH_domain"/>
</dbReference>
<dbReference type="InterPro" id="IPR039360">
    <property type="entry name" value="Ras_GTPase"/>
</dbReference>
<dbReference type="InterPro" id="IPR037777">
    <property type="entry name" value="RASA4_PH"/>
</dbReference>
<dbReference type="InterPro" id="IPR023152">
    <property type="entry name" value="RasGAP_CS"/>
</dbReference>
<dbReference type="InterPro" id="IPR001936">
    <property type="entry name" value="RasGAP_dom"/>
</dbReference>
<dbReference type="InterPro" id="IPR008936">
    <property type="entry name" value="Rho_GTPase_activation_prot"/>
</dbReference>
<dbReference type="InterPro" id="IPR001562">
    <property type="entry name" value="Znf_Btk_motif"/>
</dbReference>
<dbReference type="PANTHER" id="PTHR10194:SF4">
    <property type="entry name" value="RAS GTPASE-ACTIVATING PROTEIN 4-RELATED"/>
    <property type="match status" value="1"/>
</dbReference>
<dbReference type="PANTHER" id="PTHR10194">
    <property type="entry name" value="RAS GTPASE-ACTIVATING PROTEINS"/>
    <property type="match status" value="1"/>
</dbReference>
<dbReference type="Pfam" id="PF00779">
    <property type="entry name" value="BTK"/>
    <property type="match status" value="1"/>
</dbReference>
<dbReference type="Pfam" id="PF00168">
    <property type="entry name" value="C2"/>
    <property type="match status" value="2"/>
</dbReference>
<dbReference type="Pfam" id="PF00169">
    <property type="entry name" value="PH"/>
    <property type="match status" value="1"/>
</dbReference>
<dbReference type="Pfam" id="PF00616">
    <property type="entry name" value="RasGAP"/>
    <property type="match status" value="1"/>
</dbReference>
<dbReference type="PRINTS" id="PR00360">
    <property type="entry name" value="C2DOMAIN"/>
</dbReference>
<dbReference type="SMART" id="SM00107">
    <property type="entry name" value="BTK"/>
    <property type="match status" value="1"/>
</dbReference>
<dbReference type="SMART" id="SM00239">
    <property type="entry name" value="C2"/>
    <property type="match status" value="2"/>
</dbReference>
<dbReference type="SMART" id="SM00233">
    <property type="entry name" value="PH"/>
    <property type="match status" value="1"/>
</dbReference>
<dbReference type="SMART" id="SM00323">
    <property type="entry name" value="RasGAP"/>
    <property type="match status" value="1"/>
</dbReference>
<dbReference type="SUPFAM" id="SSF49562">
    <property type="entry name" value="C2 domain (Calcium/lipid-binding domain, CaLB)"/>
    <property type="match status" value="2"/>
</dbReference>
<dbReference type="SUPFAM" id="SSF48350">
    <property type="entry name" value="GTPase activation domain, GAP"/>
    <property type="match status" value="1"/>
</dbReference>
<dbReference type="SUPFAM" id="SSF50729">
    <property type="entry name" value="PH domain-like"/>
    <property type="match status" value="1"/>
</dbReference>
<dbReference type="PROSITE" id="PS50004">
    <property type="entry name" value="C2"/>
    <property type="match status" value="2"/>
</dbReference>
<dbReference type="PROSITE" id="PS50003">
    <property type="entry name" value="PH_DOMAIN"/>
    <property type="match status" value="1"/>
</dbReference>
<dbReference type="PROSITE" id="PS00509">
    <property type="entry name" value="RAS_GTPASE_ACTIV_1"/>
    <property type="match status" value="1"/>
</dbReference>
<dbReference type="PROSITE" id="PS50018">
    <property type="entry name" value="RAS_GTPASE_ACTIV_2"/>
    <property type="match status" value="1"/>
</dbReference>
<dbReference type="PROSITE" id="PS51113">
    <property type="entry name" value="ZF_BTK"/>
    <property type="match status" value="1"/>
</dbReference>
<sequence length="803" mass="90406">MAKRSSLYIRIVEGKNLPAKDITGSSDPYCIVKVDNEPIIRTATVWKTLCPFWGEEYQVHLPPTFHAVAFYVMDEDALSRDDVIGKVCLTRDTIASHPKGFSGWAHLTEVDPDEEVQGEIHLRLEVWPGARACRLRCSVLEARDLAPKDRNGTSDPFVRVRYKGRTRETSIVKKSCYPRWNETFEFELQEGAMEALCVEAWDWDLVSRNDFLGKVVIDVQRLRVVQQEEGWFRLQPDQSKSRRHDEGNLGSLQLEVRLRDETVLPSSYYQPLVHLLCHEVKLGMQGPGQLIPLIEETTSTECRQDVATNLLKLFLGQGLAKDFLDLLFQLELSRTSETNTLFRSNSLASKSVESFLKVAGMQYLHGVLGPIINKVFEEKKYVELDPSKVEVKDVGCSGLHRPQTEAEVLEQSAQTLRAHLGALLSALSRSVRACPAVVRATFRQLFRRVRERFPGAQHENVPFIAVTSFLCLRFFSPAIMSPKLFHLRERHADARTSRTLLLLAKAVQNVGNMDTPASRAKEAWMEPLQPTVHQGVAQLKDFITKLVDIEEKDELDLQRTLSLQAPPVKEGPLFIHRTKGKGPLMSSSFKKLYFSLTTEALSFAKTPSSKKSALIKLANIRAAEKVEEKSFGGSHVMQVIYTDDAGRPQTAYLQCKCVNELNQWLSALRKVSINNTGLLGSYHPGVFRGDKWSCCHQKEKTGQGCDKTRSRVTLQEWNDPLDHDLEAQLIYRHLLGVEAMLWERHRELSGGAEAGTVPTSPGKVPEDSLARLLRVLQDLREAHSSSPAGSPPSEPNCLLELQT</sequence>
<gene>
    <name type="primary">RASA4B</name>
</gene>
<organism>
    <name type="scientific">Homo sapiens</name>
    <name type="common">Human</name>
    <dbReference type="NCBI Taxonomy" id="9606"/>
    <lineage>
        <taxon>Eukaryota</taxon>
        <taxon>Metazoa</taxon>
        <taxon>Chordata</taxon>
        <taxon>Craniata</taxon>
        <taxon>Vertebrata</taxon>
        <taxon>Euteleostomi</taxon>
        <taxon>Mammalia</taxon>
        <taxon>Eutheria</taxon>
        <taxon>Euarchontoglires</taxon>
        <taxon>Primates</taxon>
        <taxon>Haplorrhini</taxon>
        <taxon>Catarrhini</taxon>
        <taxon>Hominidae</taxon>
        <taxon>Homo</taxon>
    </lineage>
</organism>
<comment type="function">
    <text evidence="1">Ca(2+)-dependent Ras GTPase-activating protein, that may play a role in the Ras-MAPK pathway.</text>
</comment>
<comment type="cofactor">
    <cofactor evidence="2">
        <name>Ca(2+)</name>
        <dbReference type="ChEBI" id="CHEBI:29108"/>
    </cofactor>
    <text evidence="2">Binds 3 Ca(2+) ions per C2 domain.</text>
</comment>
<comment type="subcellular location">
    <subcellularLocation>
        <location evidence="1">Cytoplasm</location>
        <location evidence="1">Cytosol</location>
    </subcellularLocation>
    <subcellularLocation>
        <location evidence="1">Cell membrane</location>
        <topology evidence="1">Peripheral membrane protein</topology>
    </subcellularLocation>
</comment>
<keyword id="KW-0106">Calcium</keyword>
<keyword id="KW-1003">Cell membrane</keyword>
<keyword id="KW-0963">Cytoplasm</keyword>
<keyword id="KW-0343">GTPase activation</keyword>
<keyword id="KW-0472">Membrane</keyword>
<keyword id="KW-0479">Metal-binding</keyword>
<keyword id="KW-1267">Proteomics identification</keyword>
<keyword id="KW-1185">Reference proteome</keyword>
<keyword id="KW-0677">Repeat</keyword>
<keyword id="KW-0862">Zinc</keyword>
<keyword id="KW-0863">Zinc-finger</keyword>
<protein>
    <recommendedName>
        <fullName>Ras GTPase-activating protein 4B</fullName>
    </recommendedName>
</protein>
<evidence type="ECO:0000250" key="1">
    <source>
        <dbReference type="UniProtKB" id="O43374"/>
    </source>
</evidence>
<evidence type="ECO:0000255" key="2">
    <source>
        <dbReference type="PROSITE-ProRule" id="PRU00041"/>
    </source>
</evidence>
<evidence type="ECO:0000255" key="3">
    <source>
        <dbReference type="PROSITE-ProRule" id="PRU00145"/>
    </source>
</evidence>
<evidence type="ECO:0000255" key="4">
    <source>
        <dbReference type="PROSITE-ProRule" id="PRU00167"/>
    </source>
</evidence>
<evidence type="ECO:0000255" key="5">
    <source>
        <dbReference type="PROSITE-ProRule" id="PRU00432"/>
    </source>
</evidence>
<evidence type="ECO:0000256" key="6">
    <source>
        <dbReference type="SAM" id="MobiDB-lite"/>
    </source>
</evidence>
<feature type="chain" id="PRO_0000395324" description="Ras GTPase-activating protein 4B">
    <location>
        <begin position="1"/>
        <end position="803"/>
    </location>
</feature>
<feature type="domain" description="C2 1" evidence="2">
    <location>
        <begin position="1"/>
        <end position="105"/>
    </location>
</feature>
<feature type="domain" description="C2 2" evidence="2">
    <location>
        <begin position="116"/>
        <end position="232"/>
    </location>
</feature>
<feature type="domain" description="Ras-GAP" evidence="4">
    <location>
        <begin position="318"/>
        <end position="546"/>
    </location>
</feature>
<feature type="domain" description="PH" evidence="3">
    <location>
        <begin position="566"/>
        <end position="673"/>
    </location>
</feature>
<feature type="zinc finger region" description="Btk-type" evidence="5">
    <location>
        <begin position="675"/>
        <end position="711"/>
    </location>
</feature>
<feature type="region of interest" description="Disordered" evidence="6">
    <location>
        <begin position="781"/>
        <end position="803"/>
    </location>
</feature>
<feature type="binding site" evidence="2">
    <location>
        <position position="21"/>
    </location>
    <ligand>
        <name>Ca(2+)</name>
        <dbReference type="ChEBI" id="CHEBI:29108"/>
        <label>1</label>
    </ligand>
</feature>
<feature type="binding site" evidence="2">
    <location>
        <position position="21"/>
    </location>
    <ligand>
        <name>Ca(2+)</name>
        <dbReference type="ChEBI" id="CHEBI:29108"/>
        <label>2</label>
    </ligand>
</feature>
<feature type="binding site" evidence="2">
    <location>
        <position position="27"/>
    </location>
    <ligand>
        <name>Ca(2+)</name>
        <dbReference type="ChEBI" id="CHEBI:29108"/>
        <label>1</label>
    </ligand>
</feature>
<feature type="binding site" evidence="2">
    <location>
        <position position="74"/>
    </location>
    <ligand>
        <name>Ca(2+)</name>
        <dbReference type="ChEBI" id="CHEBI:29108"/>
        <label>1</label>
    </ligand>
</feature>
<feature type="binding site" evidence="2">
    <location>
        <position position="74"/>
    </location>
    <ligand>
        <name>Ca(2+)</name>
        <dbReference type="ChEBI" id="CHEBI:29108"/>
        <label>2</label>
    </ligand>
</feature>
<feature type="binding site" evidence="2">
    <location>
        <position position="76"/>
    </location>
    <ligand>
        <name>Ca(2+)</name>
        <dbReference type="ChEBI" id="CHEBI:29108"/>
        <label>1</label>
    </ligand>
</feature>
<feature type="binding site" evidence="2">
    <location>
        <position position="76"/>
    </location>
    <ligand>
        <name>Ca(2+)</name>
        <dbReference type="ChEBI" id="CHEBI:29108"/>
        <label>2</label>
    </ligand>
</feature>
<feature type="binding site" evidence="2">
    <location>
        <position position="76"/>
    </location>
    <ligand>
        <name>Ca(2+)</name>
        <dbReference type="ChEBI" id="CHEBI:29108"/>
        <label>3</label>
    </ligand>
</feature>
<feature type="binding site" evidence="2">
    <location>
        <position position="79"/>
    </location>
    <ligand>
        <name>Ca(2+)</name>
        <dbReference type="ChEBI" id="CHEBI:29108"/>
        <label>3</label>
    </ligand>
</feature>
<feature type="binding site" evidence="2">
    <location>
        <position position="82"/>
    </location>
    <ligand>
        <name>Ca(2+)</name>
        <dbReference type="ChEBI" id="CHEBI:29108"/>
        <label>2</label>
    </ligand>
</feature>
<feature type="binding site" evidence="2">
    <location>
        <position position="82"/>
    </location>
    <ligand>
        <name>Ca(2+)</name>
        <dbReference type="ChEBI" id="CHEBI:29108"/>
        <label>3</label>
    </ligand>
</feature>
<feature type="binding site" evidence="2">
    <location>
        <position position="149"/>
    </location>
    <ligand>
        <name>Ca(2+)</name>
        <dbReference type="ChEBI" id="CHEBI:29108"/>
        <label>4</label>
    </ligand>
</feature>
<feature type="binding site" evidence="2">
    <location>
        <position position="149"/>
    </location>
    <ligand>
        <name>Ca(2+)</name>
        <dbReference type="ChEBI" id="CHEBI:29108"/>
        <label>5</label>
    </ligand>
</feature>
<feature type="binding site" evidence="2">
    <location>
        <position position="155"/>
    </location>
    <ligand>
        <name>Ca(2+)</name>
        <dbReference type="ChEBI" id="CHEBI:29108"/>
        <label>4</label>
    </ligand>
</feature>
<feature type="binding site" evidence="2">
    <location>
        <position position="202"/>
    </location>
    <ligand>
        <name>Ca(2+)</name>
        <dbReference type="ChEBI" id="CHEBI:29108"/>
        <label>4</label>
    </ligand>
</feature>
<feature type="binding site" evidence="2">
    <location>
        <position position="202"/>
    </location>
    <ligand>
        <name>Ca(2+)</name>
        <dbReference type="ChEBI" id="CHEBI:29108"/>
        <label>5</label>
    </ligand>
</feature>
<feature type="binding site" evidence="2">
    <location>
        <position position="204"/>
    </location>
    <ligand>
        <name>Ca(2+)</name>
        <dbReference type="ChEBI" id="CHEBI:29108"/>
        <label>4</label>
    </ligand>
</feature>
<feature type="binding site" evidence="2">
    <location>
        <position position="204"/>
    </location>
    <ligand>
        <name>Ca(2+)</name>
        <dbReference type="ChEBI" id="CHEBI:29108"/>
        <label>5</label>
    </ligand>
</feature>
<feature type="binding site" evidence="2">
    <location>
        <position position="204"/>
    </location>
    <ligand>
        <name>Ca(2+)</name>
        <dbReference type="ChEBI" id="CHEBI:29108"/>
        <label>6</label>
    </ligand>
</feature>
<feature type="binding site" evidence="2">
    <location>
        <position position="207"/>
    </location>
    <ligand>
        <name>Ca(2+)</name>
        <dbReference type="ChEBI" id="CHEBI:29108"/>
        <label>6</label>
    </ligand>
</feature>
<feature type="binding site" evidence="2">
    <location>
        <position position="210"/>
    </location>
    <ligand>
        <name>Ca(2+)</name>
        <dbReference type="ChEBI" id="CHEBI:29108"/>
        <label>5</label>
    </ligand>
</feature>
<feature type="binding site" evidence="2">
    <location>
        <position position="210"/>
    </location>
    <ligand>
        <name>Ca(2+)</name>
        <dbReference type="ChEBI" id="CHEBI:29108"/>
        <label>6</label>
    </ligand>
</feature>
<feature type="binding site" evidence="5">
    <location>
        <position position="683"/>
    </location>
    <ligand>
        <name>Zn(2+)</name>
        <dbReference type="ChEBI" id="CHEBI:29105"/>
    </ligand>
</feature>
<feature type="binding site" evidence="5">
    <location>
        <position position="694"/>
    </location>
    <ligand>
        <name>Zn(2+)</name>
        <dbReference type="ChEBI" id="CHEBI:29105"/>
    </ligand>
</feature>
<feature type="binding site" evidence="5">
    <location>
        <position position="695"/>
    </location>
    <ligand>
        <name>Zn(2+)</name>
        <dbReference type="ChEBI" id="CHEBI:29105"/>
    </ligand>
</feature>
<feature type="binding site" evidence="5">
    <location>
        <position position="705"/>
    </location>
    <ligand>
        <name>Zn(2+)</name>
        <dbReference type="ChEBI" id="CHEBI:29105"/>
    </ligand>
</feature>
<feature type="site" description="Arginine finger; crucial for GTP hydrolysis by stabilizing the transition state" evidence="4">
    <location>
        <position position="343"/>
    </location>
</feature>
<proteinExistence type="evidence at protein level"/>
<reference key="1">
    <citation type="journal article" date="2003" name="Nature">
        <title>The DNA sequence of human chromosome 7.</title>
        <authorList>
            <person name="Hillier L.W."/>
            <person name="Fulton R.S."/>
            <person name="Fulton L.A."/>
            <person name="Graves T.A."/>
            <person name="Pepin K.H."/>
            <person name="Wagner-McPherson C."/>
            <person name="Layman D."/>
            <person name="Maas J."/>
            <person name="Jaeger S."/>
            <person name="Walker R."/>
            <person name="Wylie K."/>
            <person name="Sekhon M."/>
            <person name="Becker M.C."/>
            <person name="O'Laughlin M.D."/>
            <person name="Schaller M.E."/>
            <person name="Fewell G.A."/>
            <person name="Delehaunty K.D."/>
            <person name="Miner T.L."/>
            <person name="Nash W.E."/>
            <person name="Cordes M."/>
            <person name="Du H."/>
            <person name="Sun H."/>
            <person name="Edwards J."/>
            <person name="Bradshaw-Cordum H."/>
            <person name="Ali J."/>
            <person name="Andrews S."/>
            <person name="Isak A."/>
            <person name="Vanbrunt A."/>
            <person name="Nguyen C."/>
            <person name="Du F."/>
            <person name="Lamar B."/>
            <person name="Courtney L."/>
            <person name="Kalicki J."/>
            <person name="Ozersky P."/>
            <person name="Bielicki L."/>
            <person name="Scott K."/>
            <person name="Holmes A."/>
            <person name="Harkins R."/>
            <person name="Harris A."/>
            <person name="Strong C.M."/>
            <person name="Hou S."/>
            <person name="Tomlinson C."/>
            <person name="Dauphin-Kohlberg S."/>
            <person name="Kozlowicz-Reilly A."/>
            <person name="Leonard S."/>
            <person name="Rohlfing T."/>
            <person name="Rock S.M."/>
            <person name="Tin-Wollam A.-M."/>
            <person name="Abbott A."/>
            <person name="Minx P."/>
            <person name="Maupin R."/>
            <person name="Strowmatt C."/>
            <person name="Latreille P."/>
            <person name="Miller N."/>
            <person name="Johnson D."/>
            <person name="Murray J."/>
            <person name="Woessner J.P."/>
            <person name="Wendl M.C."/>
            <person name="Yang S.-P."/>
            <person name="Schultz B.R."/>
            <person name="Wallis J.W."/>
            <person name="Spieth J."/>
            <person name="Bieri T.A."/>
            <person name="Nelson J.O."/>
            <person name="Berkowicz N."/>
            <person name="Wohldmann P.E."/>
            <person name="Cook L.L."/>
            <person name="Hickenbotham M.T."/>
            <person name="Eldred J."/>
            <person name="Williams D."/>
            <person name="Bedell J.A."/>
            <person name="Mardis E.R."/>
            <person name="Clifton S.W."/>
            <person name="Chissoe S.L."/>
            <person name="Marra M.A."/>
            <person name="Raymond C."/>
            <person name="Haugen E."/>
            <person name="Gillett W."/>
            <person name="Zhou Y."/>
            <person name="James R."/>
            <person name="Phelps K."/>
            <person name="Iadanoto S."/>
            <person name="Bubb K."/>
            <person name="Simms E."/>
            <person name="Levy R."/>
            <person name="Clendenning J."/>
            <person name="Kaul R."/>
            <person name="Kent W.J."/>
            <person name="Furey T.S."/>
            <person name="Baertsch R.A."/>
            <person name="Brent M.R."/>
            <person name="Keibler E."/>
            <person name="Flicek P."/>
            <person name="Bork P."/>
            <person name="Suyama M."/>
            <person name="Bailey J.A."/>
            <person name="Portnoy M.E."/>
            <person name="Torrents D."/>
            <person name="Chinwalla A.T."/>
            <person name="Gish W.R."/>
            <person name="Eddy S.R."/>
            <person name="McPherson J.D."/>
            <person name="Olson M.V."/>
            <person name="Eichler E.E."/>
            <person name="Green E.D."/>
            <person name="Waterston R.H."/>
            <person name="Wilson R.K."/>
        </authorList>
    </citation>
    <scope>NUCLEOTIDE SEQUENCE [LARGE SCALE GENOMIC DNA]</scope>
</reference>